<comment type="function">
    <text evidence="1">Promotes transcriptional elongation by Su(Tpl)/ELL. Essential for development (By similarity).</text>
</comment>
<comment type="subcellular location">
    <subcellularLocation>
        <location evidence="2">Nucleus</location>
    </subcellularLocation>
</comment>
<comment type="similarity">
    <text evidence="3">Belongs to the EAF family.</text>
</comment>
<comment type="sequence caution" evidence="5">
    <conflict type="erroneous gene model prediction">
        <sequence resource="EMBL-CDS" id="EDW09992"/>
    </conflict>
</comment>
<protein>
    <recommendedName>
        <fullName evidence="1">Ell-associated factor Eaf</fullName>
    </recommendedName>
</protein>
<organism>
    <name type="scientific">Drosophila mojavensis</name>
    <name type="common">Fruit fly</name>
    <dbReference type="NCBI Taxonomy" id="7230"/>
    <lineage>
        <taxon>Eukaryota</taxon>
        <taxon>Metazoa</taxon>
        <taxon>Ecdysozoa</taxon>
        <taxon>Arthropoda</taxon>
        <taxon>Hexapoda</taxon>
        <taxon>Insecta</taxon>
        <taxon>Pterygota</taxon>
        <taxon>Neoptera</taxon>
        <taxon>Endopterygota</taxon>
        <taxon>Diptera</taxon>
        <taxon>Brachycera</taxon>
        <taxon>Muscomorpha</taxon>
        <taxon>Ephydroidea</taxon>
        <taxon>Drosophilidae</taxon>
        <taxon>Drosophila</taxon>
    </lineage>
</organism>
<proteinExistence type="inferred from homology"/>
<gene>
    <name evidence="1" type="primary">Eaf</name>
    <name type="ORF">GI20822</name>
</gene>
<dbReference type="EMBL" id="CH933808">
    <property type="protein sequence ID" value="EDW09992.1"/>
    <property type="status" value="ALT_SEQ"/>
    <property type="molecule type" value="Genomic_DNA"/>
</dbReference>
<dbReference type="SMR" id="B4KND9"/>
<dbReference type="FunCoup" id="B4KND9">
    <property type="interactions" value="355"/>
</dbReference>
<dbReference type="EnsemblMetazoa" id="FBtr0425476">
    <property type="protein sequence ID" value="FBpp0383237"/>
    <property type="gene ID" value="FBgn0143557"/>
</dbReference>
<dbReference type="EnsemblMetazoa" id="XM_002006021.4">
    <property type="protein sequence ID" value="XP_002006057.2"/>
    <property type="gene ID" value="LOC6580199"/>
</dbReference>
<dbReference type="GeneID" id="6580199"/>
<dbReference type="KEGG" id="dmo:Dmoj_GI20822"/>
<dbReference type="eggNOG" id="KOG4795">
    <property type="taxonomic scope" value="Eukaryota"/>
</dbReference>
<dbReference type="InParanoid" id="B4KND9"/>
<dbReference type="OrthoDB" id="125903at2759"/>
<dbReference type="Proteomes" id="UP000009192">
    <property type="component" value="Unassembled WGS sequence"/>
</dbReference>
<dbReference type="GO" id="GO:0005654">
    <property type="term" value="C:nucleoplasm"/>
    <property type="evidence" value="ECO:0000250"/>
    <property type="project" value="UniProtKB"/>
</dbReference>
<dbReference type="GO" id="GO:0032783">
    <property type="term" value="C:super elongation complex"/>
    <property type="evidence" value="ECO:0007669"/>
    <property type="project" value="EnsemblMetazoa"/>
</dbReference>
<dbReference type="GO" id="GO:0003711">
    <property type="term" value="F:transcription elongation factor activity"/>
    <property type="evidence" value="ECO:0007669"/>
    <property type="project" value="TreeGrafter"/>
</dbReference>
<dbReference type="GO" id="GO:0034605">
    <property type="term" value="P:cellular response to heat"/>
    <property type="evidence" value="ECO:0007669"/>
    <property type="project" value="EnsemblMetazoa"/>
</dbReference>
<dbReference type="GO" id="GO:0045893">
    <property type="term" value="P:positive regulation of DNA-templated transcription"/>
    <property type="evidence" value="ECO:0000250"/>
    <property type="project" value="UniProtKB"/>
</dbReference>
<dbReference type="GO" id="GO:0006368">
    <property type="term" value="P:transcription elongation by RNA polymerase II"/>
    <property type="evidence" value="ECO:0007669"/>
    <property type="project" value="InterPro"/>
</dbReference>
<dbReference type="InterPro" id="IPR027093">
    <property type="entry name" value="EAF_fam"/>
</dbReference>
<dbReference type="InterPro" id="IPR019194">
    <property type="entry name" value="Tscrpt_elong_fac_Eaf_N"/>
</dbReference>
<dbReference type="PANTHER" id="PTHR15970">
    <property type="entry name" value="ELL-ASSOCIATED FACTOR EAF"/>
    <property type="match status" value="1"/>
</dbReference>
<dbReference type="PANTHER" id="PTHR15970:SF2">
    <property type="entry name" value="ELL-ASSOCIATED FACTOR EAF"/>
    <property type="match status" value="1"/>
</dbReference>
<dbReference type="Pfam" id="PF09816">
    <property type="entry name" value="EAF"/>
    <property type="match status" value="1"/>
</dbReference>
<evidence type="ECO:0000250" key="1">
    <source>
        <dbReference type="UniProtKB" id="Q7JRJ1"/>
    </source>
</evidence>
<evidence type="ECO:0000250" key="2">
    <source>
        <dbReference type="UniProtKB" id="Q96JC9"/>
    </source>
</evidence>
<evidence type="ECO:0000255" key="3"/>
<evidence type="ECO:0000256" key="4">
    <source>
        <dbReference type="SAM" id="MobiDB-lite"/>
    </source>
</evidence>
<evidence type="ECO:0000305" key="5"/>
<evidence type="ECO:0000312" key="6">
    <source>
        <dbReference type="EMBL" id="EDW09992.1"/>
    </source>
</evidence>
<feature type="chain" id="PRO_0000386601" description="Ell-associated factor Eaf">
    <location>
        <begin position="1"/>
        <end position="518"/>
    </location>
</feature>
<feature type="region of interest" description="Disordered" evidence="4">
    <location>
        <begin position="119"/>
        <end position="216"/>
    </location>
</feature>
<feature type="region of interest" description="Disordered" evidence="4">
    <location>
        <begin position="241"/>
        <end position="518"/>
    </location>
</feature>
<feature type="compositionally biased region" description="Polar residues" evidence="4">
    <location>
        <begin position="119"/>
        <end position="128"/>
    </location>
</feature>
<feature type="compositionally biased region" description="Polar residues" evidence="4">
    <location>
        <begin position="163"/>
        <end position="182"/>
    </location>
</feature>
<feature type="compositionally biased region" description="Polar residues" evidence="4">
    <location>
        <begin position="253"/>
        <end position="265"/>
    </location>
</feature>
<feature type="compositionally biased region" description="Polar residues" evidence="4">
    <location>
        <begin position="274"/>
        <end position="284"/>
    </location>
</feature>
<feature type="compositionally biased region" description="Low complexity" evidence="4">
    <location>
        <begin position="289"/>
        <end position="342"/>
    </location>
</feature>
<feature type="compositionally biased region" description="Polar residues" evidence="4">
    <location>
        <begin position="343"/>
        <end position="355"/>
    </location>
</feature>
<feature type="compositionally biased region" description="Low complexity" evidence="4">
    <location>
        <begin position="368"/>
        <end position="377"/>
    </location>
</feature>
<feature type="compositionally biased region" description="Acidic residues" evidence="4">
    <location>
        <begin position="397"/>
        <end position="412"/>
    </location>
</feature>
<feature type="compositionally biased region" description="Low complexity" evidence="4">
    <location>
        <begin position="418"/>
        <end position="428"/>
    </location>
</feature>
<feature type="compositionally biased region" description="Low complexity" evidence="4">
    <location>
        <begin position="463"/>
        <end position="476"/>
    </location>
</feature>
<feature type="compositionally biased region" description="Low complexity" evidence="4">
    <location>
        <begin position="500"/>
        <end position="518"/>
    </location>
</feature>
<feature type="modified residue" description="Phosphoserine" evidence="1">
    <location>
        <position position="192"/>
    </location>
</feature>
<keyword id="KW-0010">Activator</keyword>
<keyword id="KW-0217">Developmental protein</keyword>
<keyword id="KW-0539">Nucleus</keyword>
<keyword id="KW-0597">Phosphoprotein</keyword>
<keyword id="KW-1185">Reference proteome</keyword>
<keyword id="KW-0804">Transcription</keyword>
<keyword id="KW-0805">Transcription regulation</keyword>
<reference evidence="6" key="1">
    <citation type="journal article" date="2007" name="Nature">
        <title>Evolution of genes and genomes on the Drosophila phylogeny.</title>
        <authorList>
            <consortium name="Drosophila 12 genomes consortium"/>
        </authorList>
    </citation>
    <scope>NUCLEOTIDE SEQUENCE [LARGE SCALE GENOMIC DNA]</scope>
    <source>
        <strain evidence="6">Tucson 15081-1352.22</strain>
    </source>
</reference>
<accession>B4KND9</accession>
<name>EAF_DROMO</name>
<sequence length="518" mass="56617">MMMTKQKPTLTERLNIGGDEVRELKLGATFNPKNTATAFHTIKYDFKPASVDTSRMATVDVGSNNQVTVTVPNLESSGVPQTVYKGNHKKYTKECLIIFDKETGAITLEKLNHNIQVKKTRSEMTNKPSLMPATNAAPMSSGPNGVPMPSGAMAGTGSGPKLENSTMRITSKTKVSTGSRRNNIIDFKPRNSPMQQSSPSRPVASHRSPQSAPAWHANNAQQTLPSIPMIMDDDDFGLSAALHNGGGGGGGQANISGSSTGSSVGQPDYGSVNMGKQRQASSQGHAKRQQQTQRSSPPMQQQQQQQNYGRGGANNNYAQQLHQQQQQQQQQQLQQQQQQMQQRASFSHSNHSNSMPLDLDSPTHHEQAAQSMAQAAAVLEQQIGGELSASSSSSESESSDSDSGSDSDDSTEDDRSTHQQQQPPGQLSQHHHHHMQQQQHMHQLPNLGLGSISPTYNSHQHHQQQQQQHQQQQQQQSHHHHHQQQQQQSSIYASNGGFPNDLLQNDLQLSSNSSDDDD</sequence>